<reference key="1">
    <citation type="journal article" date="1997" name="Nature">
        <title>The nucleotide sequence of Saccharomyces cerevisiae chromosome IV.</title>
        <authorList>
            <person name="Jacq C."/>
            <person name="Alt-Moerbe J."/>
            <person name="Andre B."/>
            <person name="Arnold W."/>
            <person name="Bahr A."/>
            <person name="Ballesta J.P.G."/>
            <person name="Bargues M."/>
            <person name="Baron L."/>
            <person name="Becker A."/>
            <person name="Biteau N."/>
            <person name="Bloecker H."/>
            <person name="Blugeon C."/>
            <person name="Boskovic J."/>
            <person name="Brandt P."/>
            <person name="Brueckner M."/>
            <person name="Buitrago M.J."/>
            <person name="Coster F."/>
            <person name="Delaveau T."/>
            <person name="del Rey F."/>
            <person name="Dujon B."/>
            <person name="Eide L.G."/>
            <person name="Garcia-Cantalejo J.M."/>
            <person name="Goffeau A."/>
            <person name="Gomez-Peris A."/>
            <person name="Granotier C."/>
            <person name="Hanemann V."/>
            <person name="Hankeln T."/>
            <person name="Hoheisel J.D."/>
            <person name="Jaeger W."/>
            <person name="Jimenez A."/>
            <person name="Jonniaux J.-L."/>
            <person name="Kraemer C."/>
            <person name="Kuester H."/>
            <person name="Laamanen P."/>
            <person name="Legros Y."/>
            <person name="Louis E.J."/>
            <person name="Moeller-Rieker S."/>
            <person name="Monnet A."/>
            <person name="Moro M."/>
            <person name="Mueller-Auer S."/>
            <person name="Nussbaumer B."/>
            <person name="Paricio N."/>
            <person name="Paulin L."/>
            <person name="Perea J."/>
            <person name="Perez-Alonso M."/>
            <person name="Perez-Ortin J.E."/>
            <person name="Pohl T.M."/>
            <person name="Prydz H."/>
            <person name="Purnelle B."/>
            <person name="Rasmussen S.W."/>
            <person name="Remacha M.A."/>
            <person name="Revuelta J.L."/>
            <person name="Rieger M."/>
            <person name="Salom D."/>
            <person name="Saluz H.P."/>
            <person name="Saiz J.E."/>
            <person name="Saren A.-M."/>
            <person name="Schaefer M."/>
            <person name="Scharfe M."/>
            <person name="Schmidt E.R."/>
            <person name="Schneider C."/>
            <person name="Scholler P."/>
            <person name="Schwarz S."/>
            <person name="Soler-Mira A."/>
            <person name="Urrestarazu L.A."/>
            <person name="Verhasselt P."/>
            <person name="Vissers S."/>
            <person name="Voet M."/>
            <person name="Volckaert G."/>
            <person name="Wagner G."/>
            <person name="Wambutt R."/>
            <person name="Wedler E."/>
            <person name="Wedler H."/>
            <person name="Woelfl S."/>
            <person name="Harris D.E."/>
            <person name="Bowman S."/>
            <person name="Brown D."/>
            <person name="Churcher C.M."/>
            <person name="Connor R."/>
            <person name="Dedman K."/>
            <person name="Gentles S."/>
            <person name="Hamlin N."/>
            <person name="Hunt S."/>
            <person name="Jones L."/>
            <person name="McDonald S."/>
            <person name="Murphy L.D."/>
            <person name="Niblett D."/>
            <person name="Odell C."/>
            <person name="Oliver K."/>
            <person name="Rajandream M.A."/>
            <person name="Richards C."/>
            <person name="Shore L."/>
            <person name="Walsh S.V."/>
            <person name="Barrell B.G."/>
            <person name="Dietrich F.S."/>
            <person name="Mulligan J.T."/>
            <person name="Allen E."/>
            <person name="Araujo R."/>
            <person name="Aviles E."/>
            <person name="Berno A."/>
            <person name="Carpenter J."/>
            <person name="Chen E."/>
            <person name="Cherry J.M."/>
            <person name="Chung E."/>
            <person name="Duncan M."/>
            <person name="Hunicke-Smith S."/>
            <person name="Hyman R.W."/>
            <person name="Komp C."/>
            <person name="Lashkari D."/>
            <person name="Lew H."/>
            <person name="Lin D."/>
            <person name="Mosedale D."/>
            <person name="Nakahara K."/>
            <person name="Namath A."/>
            <person name="Oefner P."/>
            <person name="Oh C."/>
            <person name="Petel F.X."/>
            <person name="Roberts D."/>
            <person name="Schramm S."/>
            <person name="Schroeder M."/>
            <person name="Shogren T."/>
            <person name="Shroff N."/>
            <person name="Winant A."/>
            <person name="Yelton M.A."/>
            <person name="Botstein D."/>
            <person name="Davis R.W."/>
            <person name="Johnston M."/>
            <person name="Andrews S."/>
            <person name="Brinkman R."/>
            <person name="Cooper J."/>
            <person name="Ding H."/>
            <person name="Du Z."/>
            <person name="Favello A."/>
            <person name="Fulton L."/>
            <person name="Gattung S."/>
            <person name="Greco T."/>
            <person name="Hallsworth K."/>
            <person name="Hawkins J."/>
            <person name="Hillier L.W."/>
            <person name="Jier M."/>
            <person name="Johnson D."/>
            <person name="Johnston L."/>
            <person name="Kirsten J."/>
            <person name="Kucaba T."/>
            <person name="Langston Y."/>
            <person name="Latreille P."/>
            <person name="Le T."/>
            <person name="Mardis E."/>
            <person name="Menezes S."/>
            <person name="Miller N."/>
            <person name="Nhan M."/>
            <person name="Pauley A."/>
            <person name="Peluso D."/>
            <person name="Rifkin L."/>
            <person name="Riles L."/>
            <person name="Taich A."/>
            <person name="Trevaskis E."/>
            <person name="Vignati D."/>
            <person name="Wilcox L."/>
            <person name="Wohldman P."/>
            <person name="Vaudin M."/>
            <person name="Wilson R."/>
            <person name="Waterston R."/>
            <person name="Albermann K."/>
            <person name="Hani J."/>
            <person name="Heumann K."/>
            <person name="Kleine K."/>
            <person name="Mewes H.-W."/>
            <person name="Zollner A."/>
            <person name="Zaccaria P."/>
        </authorList>
    </citation>
    <scope>NUCLEOTIDE SEQUENCE [LARGE SCALE GENOMIC DNA]</scope>
    <source>
        <strain>ATCC 204508 / S288c</strain>
    </source>
</reference>
<reference key="2">
    <citation type="journal article" date="2014" name="G3 (Bethesda)">
        <title>The reference genome sequence of Saccharomyces cerevisiae: Then and now.</title>
        <authorList>
            <person name="Engel S.R."/>
            <person name="Dietrich F.S."/>
            <person name="Fisk D.G."/>
            <person name="Binkley G."/>
            <person name="Balakrishnan R."/>
            <person name="Costanzo M.C."/>
            <person name="Dwight S.S."/>
            <person name="Hitz B.C."/>
            <person name="Karra K."/>
            <person name="Nash R.S."/>
            <person name="Weng S."/>
            <person name="Wong E.D."/>
            <person name="Lloyd P."/>
            <person name="Skrzypek M.S."/>
            <person name="Miyasato S.R."/>
            <person name="Simison M."/>
            <person name="Cherry J.M."/>
        </authorList>
    </citation>
    <scope>GENOME REANNOTATION</scope>
    <source>
        <strain>ATCC 204508 / S288c</strain>
    </source>
</reference>
<reference key="3">
    <citation type="journal article" date="2003" name="Nature">
        <title>Global analysis of protein expression in yeast.</title>
        <authorList>
            <person name="Ghaemmaghami S."/>
            <person name="Huh W.-K."/>
            <person name="Bower K."/>
            <person name="Howson R.W."/>
            <person name="Belle A."/>
            <person name="Dephoure N."/>
            <person name="O'Shea E.K."/>
            <person name="Weissman J.S."/>
        </authorList>
    </citation>
    <scope>LEVEL OF PROTEIN EXPRESSION [LARGE SCALE ANALYSIS]</scope>
</reference>
<reference key="4">
    <citation type="journal article" date="2007" name="J. Proteome Res.">
        <title>Large-scale phosphorylation analysis of alpha-factor-arrested Saccharomyces cerevisiae.</title>
        <authorList>
            <person name="Li X."/>
            <person name="Gerber S.A."/>
            <person name="Rudner A.D."/>
            <person name="Beausoleil S.A."/>
            <person name="Haas W."/>
            <person name="Villen J."/>
            <person name="Elias J.E."/>
            <person name="Gygi S.P."/>
        </authorList>
    </citation>
    <scope>IDENTIFICATION BY MASS SPECTROMETRY [LARGE SCALE ANALYSIS]</scope>
    <source>
        <strain>ADR376</strain>
    </source>
</reference>
<reference key="5">
    <citation type="journal article" date="2008" name="Mol. Cell. Proteomics">
        <title>A multidimensional chromatography technology for in-depth phosphoproteome analysis.</title>
        <authorList>
            <person name="Albuquerque C.P."/>
            <person name="Smolka M.B."/>
            <person name="Payne S.H."/>
            <person name="Bafna V."/>
            <person name="Eng J."/>
            <person name="Zhou H."/>
        </authorList>
    </citation>
    <scope>PHOSPHORYLATION [LARGE SCALE ANALYSIS] AT SER-161 AND THR-191</scope>
    <scope>IDENTIFICATION BY MASS SPECTROMETRY [LARGE SCALE ANALYSIS]</scope>
</reference>
<reference key="6">
    <citation type="journal article" date="2009" name="Science">
        <title>Global analysis of Cdk1 substrate phosphorylation sites provides insights into evolution.</title>
        <authorList>
            <person name="Holt L.J."/>
            <person name="Tuch B.B."/>
            <person name="Villen J."/>
            <person name="Johnson A.D."/>
            <person name="Gygi S.P."/>
            <person name="Morgan D.O."/>
        </authorList>
    </citation>
    <scope>PHOSPHORYLATION [LARGE SCALE ANALYSIS] AT SER-161</scope>
    <scope>IDENTIFICATION BY MASS SPECTROMETRY [LARGE SCALE ANALYSIS]</scope>
</reference>
<accession>Q03446</accession>
<accession>D6VRZ0</accession>
<organism>
    <name type="scientific">Saccharomyces cerevisiae (strain ATCC 204508 / S288c)</name>
    <name type="common">Baker's yeast</name>
    <dbReference type="NCBI Taxonomy" id="559292"/>
    <lineage>
        <taxon>Eukaryota</taxon>
        <taxon>Fungi</taxon>
        <taxon>Dikarya</taxon>
        <taxon>Ascomycota</taxon>
        <taxon>Saccharomycotina</taxon>
        <taxon>Saccharomycetes</taxon>
        <taxon>Saccharomycetales</taxon>
        <taxon>Saccharomycetaceae</taxon>
        <taxon>Saccharomyces</taxon>
    </lineage>
</organism>
<dbReference type="EMBL" id="Z48008">
    <property type="protein sequence ID" value="CAA88063.1"/>
    <property type="molecule type" value="Genomic_DNA"/>
</dbReference>
<dbReference type="EMBL" id="BK006938">
    <property type="protein sequence ID" value="DAA11850.1"/>
    <property type="molecule type" value="Genomic_DNA"/>
</dbReference>
<dbReference type="PIR" id="S50984">
    <property type="entry name" value="S50984"/>
</dbReference>
<dbReference type="RefSeq" id="NP_010286.3">
    <property type="nucleotide sequence ID" value="NM_001180311.3"/>
</dbReference>
<dbReference type="SMR" id="Q03446"/>
<dbReference type="BioGRID" id="32056">
    <property type="interactions" value="33"/>
</dbReference>
<dbReference type="DIP" id="DIP-4552N"/>
<dbReference type="FunCoup" id="Q03446">
    <property type="interactions" value="32"/>
</dbReference>
<dbReference type="IntAct" id="Q03446">
    <property type="interactions" value="1"/>
</dbReference>
<dbReference type="STRING" id="4932.YDR003W"/>
<dbReference type="iPTMnet" id="Q03446"/>
<dbReference type="PaxDb" id="4932-YDR003W"/>
<dbReference type="PeptideAtlas" id="Q03446"/>
<dbReference type="EnsemblFungi" id="YDR003W_mRNA">
    <property type="protein sequence ID" value="YDR003W"/>
    <property type="gene ID" value="YDR003W"/>
</dbReference>
<dbReference type="GeneID" id="851566"/>
<dbReference type="KEGG" id="sce:YDR003W"/>
<dbReference type="AGR" id="SGD:S000002410"/>
<dbReference type="SGD" id="S000002410">
    <property type="gene designation" value="RCR2"/>
</dbReference>
<dbReference type="VEuPathDB" id="FungiDB:YDR003W"/>
<dbReference type="eggNOG" id="ENOG502S2K8">
    <property type="taxonomic scope" value="Eukaryota"/>
</dbReference>
<dbReference type="GeneTree" id="ENSGT00940000176721"/>
<dbReference type="HOGENOM" id="CLU_078289_2_1_1"/>
<dbReference type="InParanoid" id="Q03446"/>
<dbReference type="OMA" id="EQHSPTV"/>
<dbReference type="OrthoDB" id="4088875at2759"/>
<dbReference type="BioCyc" id="YEAST:G3O-29625-MONOMER"/>
<dbReference type="BioGRID-ORCS" id="851566">
    <property type="hits" value="0 hits in 10 CRISPR screens"/>
</dbReference>
<dbReference type="PRO" id="PR:Q03446"/>
<dbReference type="Proteomes" id="UP000002311">
    <property type="component" value="Chromosome IV"/>
</dbReference>
<dbReference type="RNAct" id="Q03446">
    <property type="molecule type" value="protein"/>
</dbReference>
<dbReference type="GO" id="GO:0005737">
    <property type="term" value="C:cytoplasm"/>
    <property type="evidence" value="ECO:0007005"/>
    <property type="project" value="SGD"/>
</dbReference>
<dbReference type="GO" id="GO:0000324">
    <property type="term" value="C:fungal-type vacuole"/>
    <property type="evidence" value="ECO:0000314"/>
    <property type="project" value="SGD"/>
</dbReference>
<dbReference type="GO" id="GO:0000329">
    <property type="term" value="C:fungal-type vacuole membrane"/>
    <property type="evidence" value="ECO:0007005"/>
    <property type="project" value="SGD"/>
</dbReference>
<dbReference type="GO" id="GO:0043231">
    <property type="term" value="C:intracellular membrane-bounded organelle"/>
    <property type="evidence" value="ECO:0000318"/>
    <property type="project" value="GO_Central"/>
</dbReference>
<dbReference type="GO" id="GO:0031982">
    <property type="term" value="C:vesicle"/>
    <property type="evidence" value="ECO:0000314"/>
    <property type="project" value="SGD"/>
</dbReference>
<dbReference type="GO" id="GO:0030674">
    <property type="term" value="F:protein-macromolecule adaptor activity"/>
    <property type="evidence" value="ECO:0000314"/>
    <property type="project" value="SGD"/>
</dbReference>
<dbReference type="GO" id="GO:0072665">
    <property type="term" value="P:protein localization to vacuole"/>
    <property type="evidence" value="ECO:0000314"/>
    <property type="project" value="SGD"/>
</dbReference>
<dbReference type="GO" id="GO:0016192">
    <property type="term" value="P:vesicle-mediated transport"/>
    <property type="evidence" value="ECO:0000316"/>
    <property type="project" value="SGD"/>
</dbReference>
<dbReference type="InterPro" id="IPR020999">
    <property type="entry name" value="Chitin_synth_reg_RCR"/>
</dbReference>
<dbReference type="PANTHER" id="PTHR28187">
    <property type="entry name" value="PROTEIN RCR1-RELATED"/>
    <property type="match status" value="1"/>
</dbReference>
<dbReference type="PANTHER" id="PTHR28187:SF1">
    <property type="entry name" value="PROTEIN RCR1-RELATED"/>
    <property type="match status" value="1"/>
</dbReference>
<dbReference type="Pfam" id="PF12273">
    <property type="entry name" value="RCR"/>
    <property type="match status" value="1"/>
</dbReference>
<keyword id="KW-0472">Membrane</keyword>
<keyword id="KW-0597">Phosphoprotein</keyword>
<keyword id="KW-1185">Reference proteome</keyword>
<keyword id="KW-0812">Transmembrane</keyword>
<keyword id="KW-1133">Transmembrane helix</keyword>
<protein>
    <recommendedName>
        <fullName>Protein RCR2</fullName>
    </recommendedName>
    <alternativeName>
        <fullName>Protein SSH5</fullName>
    </alternativeName>
    <alternativeName>
        <fullName>Resistance to Congo red protein 2</fullName>
    </alternativeName>
</protein>
<proteinExistence type="evidence at protein level"/>
<sequence length="210" mass="24211">MILREQIDFLIHKRQDDNNNNGEAITDDDPFSSSSWRWGRWIFFIFFIVALLILLFSTAKVNRRRRIMGQAPIRGTAWLTPPTYRQSERDYNGTQRCVEDYVPEYTETANENDLGFYDERGEFHPNGKTEYLAPPPLSEEQASSTDKDLQRPVAAVVRIPSESEFDFNLLRPTMNNFVNGQSNRNEQHSPTVESSSFDVNNAPARAKVSK</sequence>
<evidence type="ECO:0000255" key="1"/>
<evidence type="ECO:0000256" key="2">
    <source>
        <dbReference type="SAM" id="MobiDB-lite"/>
    </source>
</evidence>
<evidence type="ECO:0000269" key="3">
    <source>
    </source>
</evidence>
<evidence type="ECO:0000305" key="4"/>
<evidence type="ECO:0007744" key="5">
    <source>
    </source>
</evidence>
<evidence type="ECO:0007744" key="6">
    <source>
    </source>
</evidence>
<gene>
    <name type="primary">RCR2</name>
    <name type="synonym">SSH5</name>
    <name type="ordered locus">YDR003W</name>
    <name type="ORF">YD8119.09</name>
</gene>
<comment type="interaction">
    <interactant intactId="EBI-18180">
        <id>Q03446</id>
    </interactant>
    <interactant intactId="EBI-16219">
        <id>P39940</id>
        <label>RSP5</label>
    </interactant>
    <organismsDiffer>false</organismsDiffer>
    <experiments>2</experiments>
</comment>
<comment type="subcellular location">
    <subcellularLocation>
        <location evidence="4">Membrane</location>
        <topology evidence="4">Single-pass membrane protein</topology>
    </subcellularLocation>
</comment>
<comment type="miscellaneous">
    <text evidence="3">Present with 1230 molecules/cell in log phase SD medium.</text>
</comment>
<comment type="similarity">
    <text evidence="4">To yeast YBR005W.</text>
</comment>
<feature type="chain" id="PRO_0000097205" description="Protein RCR2">
    <location>
        <begin position="1"/>
        <end position="210"/>
    </location>
</feature>
<feature type="transmembrane region" description="Helical" evidence="1">
    <location>
        <begin position="41"/>
        <end position="61"/>
    </location>
</feature>
<feature type="region of interest" description="Disordered" evidence="2">
    <location>
        <begin position="125"/>
        <end position="149"/>
    </location>
</feature>
<feature type="region of interest" description="Disordered" evidence="2">
    <location>
        <begin position="175"/>
        <end position="210"/>
    </location>
</feature>
<feature type="compositionally biased region" description="Polar residues" evidence="2">
    <location>
        <begin position="175"/>
        <end position="199"/>
    </location>
</feature>
<feature type="modified residue" description="Phosphoserine" evidence="5 6">
    <location>
        <position position="161"/>
    </location>
</feature>
<feature type="modified residue" description="Phosphothreonine" evidence="5">
    <location>
        <position position="191"/>
    </location>
</feature>
<name>RCR2_YEAST</name>